<sequence length="917" mass="102701">MATNFLTKIFGSRNDRLLKQYRKTVARINAMEPDYEKLSDEALRGKTQEFKDRIAQGESLDALLPEAFAVVREGSKRIMKMRHFDVQLVGGMALHYGKIAEMRTGEGKTLTATLPVYLNALSGQGVHVVTVNDYLAGRDAQWMGRLYNFLGLTVGINLPQMPREEKQAAYQADITYGTNNEYGFDYLRDNMVYDARERVQRGLNYAIVDEVDSILIDEARTPLIISGQAEDHTALYVAMNKVVPLLVRQEGEADPRTGEGVTKPGDFTLDEKTHQVFLTEQGHENAERILASQGLIPEGASLYDPANITLVHHLYAALRANHLYHRDQHYVVQNGEIVIVDEFTGRLMAGRRWSEGLHQAVEAKEGVNIQAENQTLASITFQNYFRLYNKLSGMTGTADTEAYEFQEIYGLETVVIPPNRPSKRDDQLDRVYKTTREKYEAAIADIRECHERGQPVLVGTTSIENSEIIDELLNKAGLPHQVLNAKQHAREADIVAQAGRPGMITIATNMAGRGTDIVLGGNVEKAIAALEADESLSEAERAARVQELRAQWKLDHEKVTALGGLRIIATERHESRRIDNQLRGRSGRQGDPGSSRFYLSLDDQLMRIFAGDRVKAIMDRLKMPDGEAIEAGIVTRSIESAQRKVEARNFDIRKQLLEYDDVANDQRKVIYQQRNEILDAPDLGVLIDAMRDDCLADVVRQYVPAESVEEQWDLAGLEKALANDWQVSLALQKEVEGSDAITDEEILEKVQQAAREAFLAKVGQVGAENFTQFERMVLLQSFDTNWRDHLSALDYLRQGIHLRGYAQKQPKQEYKREAFELFRQLIDQVKNEVTRLMMTVQVQSSAQLDEATQAMEDRGEGISNVTYSSPTETGEVETVADAATAAQPAAAGVRVGRNDPCPCGSGKKYKQCHGKLA</sequence>
<organism>
    <name type="scientific">Acidovorax ebreus (strain TPSY)</name>
    <name type="common">Diaphorobacter sp. (strain TPSY)</name>
    <dbReference type="NCBI Taxonomy" id="535289"/>
    <lineage>
        <taxon>Bacteria</taxon>
        <taxon>Pseudomonadati</taxon>
        <taxon>Pseudomonadota</taxon>
        <taxon>Betaproteobacteria</taxon>
        <taxon>Burkholderiales</taxon>
        <taxon>Comamonadaceae</taxon>
        <taxon>Diaphorobacter</taxon>
    </lineage>
</organism>
<evidence type="ECO:0000255" key="1">
    <source>
        <dbReference type="HAMAP-Rule" id="MF_01382"/>
    </source>
</evidence>
<comment type="function">
    <text evidence="1">Part of the Sec protein translocase complex. Interacts with the SecYEG preprotein conducting channel. Has a central role in coupling the hydrolysis of ATP to the transfer of proteins into and across the cell membrane, serving both as a receptor for the preprotein-SecB complex and as an ATP-driven molecular motor driving the stepwise translocation of polypeptide chains across the membrane.</text>
</comment>
<comment type="catalytic activity">
    <reaction evidence="1">
        <text>ATP + H2O + cellular proteinSide 1 = ADP + phosphate + cellular proteinSide 2.</text>
        <dbReference type="EC" id="7.4.2.8"/>
    </reaction>
</comment>
<comment type="cofactor">
    <cofactor evidence="1">
        <name>Zn(2+)</name>
        <dbReference type="ChEBI" id="CHEBI:29105"/>
    </cofactor>
    <text evidence="1">May bind 1 zinc ion per subunit.</text>
</comment>
<comment type="subunit">
    <text evidence="1">Monomer and homodimer. Part of the essential Sec protein translocation apparatus which comprises SecA, SecYEG and auxiliary proteins SecDF-YajC and YidC.</text>
</comment>
<comment type="subcellular location">
    <subcellularLocation>
        <location evidence="1">Cell inner membrane</location>
        <topology evidence="1">Peripheral membrane protein</topology>
        <orientation evidence="1">Cytoplasmic side</orientation>
    </subcellularLocation>
    <subcellularLocation>
        <location evidence="1">Cytoplasm</location>
    </subcellularLocation>
    <text evidence="1">Distribution is 50-50.</text>
</comment>
<comment type="similarity">
    <text evidence="1">Belongs to the SecA family.</text>
</comment>
<dbReference type="EC" id="7.4.2.8" evidence="1"/>
<dbReference type="EMBL" id="CP001392">
    <property type="protein sequence ID" value="ACM32238.1"/>
    <property type="molecule type" value="Genomic_DNA"/>
</dbReference>
<dbReference type="RefSeq" id="WP_012655743.1">
    <property type="nucleotide sequence ID" value="NC_011992.1"/>
</dbReference>
<dbReference type="SMR" id="B9MDY4"/>
<dbReference type="KEGG" id="dia:Dtpsy_0759"/>
<dbReference type="eggNOG" id="COG0653">
    <property type="taxonomic scope" value="Bacteria"/>
</dbReference>
<dbReference type="HOGENOM" id="CLU_005314_3_0_4"/>
<dbReference type="Proteomes" id="UP000000450">
    <property type="component" value="Chromosome"/>
</dbReference>
<dbReference type="GO" id="GO:0031522">
    <property type="term" value="C:cell envelope Sec protein transport complex"/>
    <property type="evidence" value="ECO:0007669"/>
    <property type="project" value="TreeGrafter"/>
</dbReference>
<dbReference type="GO" id="GO:0005829">
    <property type="term" value="C:cytosol"/>
    <property type="evidence" value="ECO:0007669"/>
    <property type="project" value="TreeGrafter"/>
</dbReference>
<dbReference type="GO" id="GO:0005886">
    <property type="term" value="C:plasma membrane"/>
    <property type="evidence" value="ECO:0007669"/>
    <property type="project" value="UniProtKB-SubCell"/>
</dbReference>
<dbReference type="GO" id="GO:0005524">
    <property type="term" value="F:ATP binding"/>
    <property type="evidence" value="ECO:0007669"/>
    <property type="project" value="UniProtKB-UniRule"/>
</dbReference>
<dbReference type="GO" id="GO:0046872">
    <property type="term" value="F:metal ion binding"/>
    <property type="evidence" value="ECO:0007669"/>
    <property type="project" value="UniProtKB-KW"/>
</dbReference>
<dbReference type="GO" id="GO:0008564">
    <property type="term" value="F:protein-exporting ATPase activity"/>
    <property type="evidence" value="ECO:0007669"/>
    <property type="project" value="UniProtKB-EC"/>
</dbReference>
<dbReference type="GO" id="GO:0065002">
    <property type="term" value="P:intracellular protein transmembrane transport"/>
    <property type="evidence" value="ECO:0007669"/>
    <property type="project" value="UniProtKB-UniRule"/>
</dbReference>
<dbReference type="GO" id="GO:0017038">
    <property type="term" value="P:protein import"/>
    <property type="evidence" value="ECO:0007669"/>
    <property type="project" value="InterPro"/>
</dbReference>
<dbReference type="GO" id="GO:0006605">
    <property type="term" value="P:protein targeting"/>
    <property type="evidence" value="ECO:0007669"/>
    <property type="project" value="UniProtKB-UniRule"/>
</dbReference>
<dbReference type="GO" id="GO:0043952">
    <property type="term" value="P:protein transport by the Sec complex"/>
    <property type="evidence" value="ECO:0007669"/>
    <property type="project" value="TreeGrafter"/>
</dbReference>
<dbReference type="CDD" id="cd17928">
    <property type="entry name" value="DEXDc_SecA"/>
    <property type="match status" value="1"/>
</dbReference>
<dbReference type="CDD" id="cd18803">
    <property type="entry name" value="SF2_C_secA"/>
    <property type="match status" value="1"/>
</dbReference>
<dbReference type="FunFam" id="3.40.50.300:FF:000081">
    <property type="entry name" value="Preprotein translocase subunit SecA"/>
    <property type="match status" value="1"/>
</dbReference>
<dbReference type="FunFam" id="3.40.50.300:FF:000113">
    <property type="entry name" value="Preprotein translocase subunit SecA"/>
    <property type="match status" value="1"/>
</dbReference>
<dbReference type="FunFam" id="3.90.1440.10:FF:000001">
    <property type="entry name" value="Preprotein translocase subunit SecA"/>
    <property type="match status" value="1"/>
</dbReference>
<dbReference type="FunFam" id="1.10.3060.10:FF:000003">
    <property type="entry name" value="Protein translocase subunit SecA"/>
    <property type="match status" value="1"/>
</dbReference>
<dbReference type="Gene3D" id="1.10.3060.10">
    <property type="entry name" value="Helical scaffold and wing domains of SecA"/>
    <property type="match status" value="1"/>
</dbReference>
<dbReference type="Gene3D" id="3.40.50.300">
    <property type="entry name" value="P-loop containing nucleotide triphosphate hydrolases"/>
    <property type="match status" value="2"/>
</dbReference>
<dbReference type="Gene3D" id="3.90.1440.10">
    <property type="entry name" value="SecA, preprotein cross-linking domain"/>
    <property type="match status" value="1"/>
</dbReference>
<dbReference type="HAMAP" id="MF_01382">
    <property type="entry name" value="SecA"/>
    <property type="match status" value="1"/>
</dbReference>
<dbReference type="InterPro" id="IPR014001">
    <property type="entry name" value="Helicase_ATP-bd"/>
</dbReference>
<dbReference type="InterPro" id="IPR001650">
    <property type="entry name" value="Helicase_C-like"/>
</dbReference>
<dbReference type="InterPro" id="IPR027417">
    <property type="entry name" value="P-loop_NTPase"/>
</dbReference>
<dbReference type="InterPro" id="IPR004027">
    <property type="entry name" value="SEC_C_motif"/>
</dbReference>
<dbReference type="InterPro" id="IPR000185">
    <property type="entry name" value="SecA"/>
</dbReference>
<dbReference type="InterPro" id="IPR020937">
    <property type="entry name" value="SecA_CS"/>
</dbReference>
<dbReference type="InterPro" id="IPR011115">
    <property type="entry name" value="SecA_DEAD"/>
</dbReference>
<dbReference type="InterPro" id="IPR014018">
    <property type="entry name" value="SecA_motor_DEAD"/>
</dbReference>
<dbReference type="InterPro" id="IPR011130">
    <property type="entry name" value="SecA_preprotein_X-link_dom"/>
</dbReference>
<dbReference type="InterPro" id="IPR044722">
    <property type="entry name" value="SecA_SF2_C"/>
</dbReference>
<dbReference type="InterPro" id="IPR011116">
    <property type="entry name" value="SecA_Wing/Scaffold"/>
</dbReference>
<dbReference type="InterPro" id="IPR036266">
    <property type="entry name" value="SecA_Wing/Scaffold_sf"/>
</dbReference>
<dbReference type="InterPro" id="IPR036670">
    <property type="entry name" value="SecA_X-link_sf"/>
</dbReference>
<dbReference type="NCBIfam" id="NF009538">
    <property type="entry name" value="PRK12904.1"/>
    <property type="match status" value="1"/>
</dbReference>
<dbReference type="NCBIfam" id="TIGR00963">
    <property type="entry name" value="secA"/>
    <property type="match status" value="1"/>
</dbReference>
<dbReference type="PANTHER" id="PTHR30612:SF0">
    <property type="entry name" value="CHLOROPLAST PROTEIN-TRANSPORTING ATPASE"/>
    <property type="match status" value="1"/>
</dbReference>
<dbReference type="PANTHER" id="PTHR30612">
    <property type="entry name" value="SECA INNER MEMBRANE COMPONENT OF SEC PROTEIN SECRETION SYSTEM"/>
    <property type="match status" value="1"/>
</dbReference>
<dbReference type="Pfam" id="PF21090">
    <property type="entry name" value="P-loop_SecA"/>
    <property type="match status" value="1"/>
</dbReference>
<dbReference type="Pfam" id="PF02810">
    <property type="entry name" value="SEC-C"/>
    <property type="match status" value="1"/>
</dbReference>
<dbReference type="Pfam" id="PF07517">
    <property type="entry name" value="SecA_DEAD"/>
    <property type="match status" value="1"/>
</dbReference>
<dbReference type="Pfam" id="PF01043">
    <property type="entry name" value="SecA_PP_bind"/>
    <property type="match status" value="1"/>
</dbReference>
<dbReference type="Pfam" id="PF07516">
    <property type="entry name" value="SecA_SW"/>
    <property type="match status" value="1"/>
</dbReference>
<dbReference type="PRINTS" id="PR00906">
    <property type="entry name" value="SECA"/>
</dbReference>
<dbReference type="SMART" id="SM00957">
    <property type="entry name" value="SecA_DEAD"/>
    <property type="match status" value="1"/>
</dbReference>
<dbReference type="SMART" id="SM00958">
    <property type="entry name" value="SecA_PP_bind"/>
    <property type="match status" value="1"/>
</dbReference>
<dbReference type="SUPFAM" id="SSF81886">
    <property type="entry name" value="Helical scaffold and wing domains of SecA"/>
    <property type="match status" value="1"/>
</dbReference>
<dbReference type="SUPFAM" id="SSF52540">
    <property type="entry name" value="P-loop containing nucleoside triphosphate hydrolases"/>
    <property type="match status" value="2"/>
</dbReference>
<dbReference type="SUPFAM" id="SSF81767">
    <property type="entry name" value="Pre-protein crosslinking domain of SecA"/>
    <property type="match status" value="1"/>
</dbReference>
<dbReference type="PROSITE" id="PS01312">
    <property type="entry name" value="SECA"/>
    <property type="match status" value="1"/>
</dbReference>
<dbReference type="PROSITE" id="PS51196">
    <property type="entry name" value="SECA_MOTOR_DEAD"/>
    <property type="match status" value="1"/>
</dbReference>
<proteinExistence type="inferred from homology"/>
<reference key="1">
    <citation type="submission" date="2009-01" db="EMBL/GenBank/DDBJ databases">
        <title>Complete sequence of Diaphorobacter sp. TPSY.</title>
        <authorList>
            <consortium name="US DOE Joint Genome Institute"/>
            <person name="Lucas S."/>
            <person name="Copeland A."/>
            <person name="Lapidus A."/>
            <person name="Glavina del Rio T."/>
            <person name="Tice H."/>
            <person name="Bruce D."/>
            <person name="Goodwin L."/>
            <person name="Pitluck S."/>
            <person name="Chertkov O."/>
            <person name="Brettin T."/>
            <person name="Detter J.C."/>
            <person name="Han C."/>
            <person name="Larimer F."/>
            <person name="Land M."/>
            <person name="Hauser L."/>
            <person name="Kyrpides N."/>
            <person name="Mikhailova N."/>
            <person name="Coates J.D."/>
        </authorList>
    </citation>
    <scope>NUCLEOTIDE SEQUENCE [LARGE SCALE GENOMIC DNA]</scope>
    <source>
        <strain>TPSY</strain>
    </source>
</reference>
<keyword id="KW-0067">ATP-binding</keyword>
<keyword id="KW-0997">Cell inner membrane</keyword>
<keyword id="KW-1003">Cell membrane</keyword>
<keyword id="KW-0963">Cytoplasm</keyword>
<keyword id="KW-0472">Membrane</keyword>
<keyword id="KW-0479">Metal-binding</keyword>
<keyword id="KW-0547">Nucleotide-binding</keyword>
<keyword id="KW-0653">Protein transport</keyword>
<keyword id="KW-1185">Reference proteome</keyword>
<keyword id="KW-1278">Translocase</keyword>
<keyword id="KW-0811">Translocation</keyword>
<keyword id="KW-0813">Transport</keyword>
<keyword id="KW-0862">Zinc</keyword>
<gene>
    <name evidence="1" type="primary">secA</name>
    <name type="ordered locus">Dtpsy_0759</name>
</gene>
<name>SECA_ACIET</name>
<protein>
    <recommendedName>
        <fullName evidence="1">Protein translocase subunit SecA</fullName>
        <ecNumber evidence="1">7.4.2.8</ecNumber>
    </recommendedName>
</protein>
<accession>B9MDY4</accession>
<feature type="chain" id="PRO_1000184226" description="Protein translocase subunit SecA">
    <location>
        <begin position="1"/>
        <end position="917"/>
    </location>
</feature>
<feature type="binding site" evidence="1">
    <location>
        <position position="87"/>
    </location>
    <ligand>
        <name>ATP</name>
        <dbReference type="ChEBI" id="CHEBI:30616"/>
    </ligand>
</feature>
<feature type="binding site" evidence="1">
    <location>
        <begin position="105"/>
        <end position="109"/>
    </location>
    <ligand>
        <name>ATP</name>
        <dbReference type="ChEBI" id="CHEBI:30616"/>
    </ligand>
</feature>
<feature type="binding site" evidence="1">
    <location>
        <position position="516"/>
    </location>
    <ligand>
        <name>ATP</name>
        <dbReference type="ChEBI" id="CHEBI:30616"/>
    </ligand>
</feature>
<feature type="binding site" evidence="1">
    <location>
        <position position="901"/>
    </location>
    <ligand>
        <name>Zn(2+)</name>
        <dbReference type="ChEBI" id="CHEBI:29105"/>
    </ligand>
</feature>
<feature type="binding site" evidence="1">
    <location>
        <position position="903"/>
    </location>
    <ligand>
        <name>Zn(2+)</name>
        <dbReference type="ChEBI" id="CHEBI:29105"/>
    </ligand>
</feature>
<feature type="binding site" evidence="1">
    <location>
        <position position="912"/>
    </location>
    <ligand>
        <name>Zn(2+)</name>
        <dbReference type="ChEBI" id="CHEBI:29105"/>
    </ligand>
</feature>
<feature type="binding site" evidence="1">
    <location>
        <position position="913"/>
    </location>
    <ligand>
        <name>Zn(2+)</name>
        <dbReference type="ChEBI" id="CHEBI:29105"/>
    </ligand>
</feature>